<accession>Q0RFD5</accession>
<organism>
    <name type="scientific">Frankia alni (strain DSM 45986 / CECT 9034 / ACN14a)</name>
    <dbReference type="NCBI Taxonomy" id="326424"/>
    <lineage>
        <taxon>Bacteria</taxon>
        <taxon>Bacillati</taxon>
        <taxon>Actinomycetota</taxon>
        <taxon>Actinomycetes</taxon>
        <taxon>Frankiales</taxon>
        <taxon>Frankiaceae</taxon>
        <taxon>Frankia</taxon>
    </lineage>
</organism>
<keyword id="KW-0963">Cytoplasm</keyword>
<keyword id="KW-0460">Magnesium</keyword>
<keyword id="KW-0479">Metal-binding</keyword>
<keyword id="KW-0566">Pantothenate biosynthesis</keyword>
<keyword id="KW-1185">Reference proteome</keyword>
<keyword id="KW-0808">Transferase</keyword>
<protein>
    <recommendedName>
        <fullName evidence="1">3-methyl-2-oxobutanoate hydroxymethyltransferase</fullName>
        <ecNumber evidence="1">2.1.2.11</ecNumber>
    </recommendedName>
    <alternativeName>
        <fullName evidence="1">Ketopantoate hydroxymethyltransferase</fullName>
        <shortName evidence="1">KPHMT</shortName>
    </alternativeName>
</protein>
<gene>
    <name evidence="1" type="primary">panB</name>
    <name type="ordered locus">FRAAL5171</name>
</gene>
<sequence>MDSSGTVRNQTSDDHSRPADAAGTAATLYGAPAETRSPRRSRFTVRDVAAAKSRGERWSMLTAYDFTTATVFDEAEIPVLLVGDSAANVVYGYDTTVPVTVDELIPLVRAVVRGAPHAMVVADLPFGSYQAGPEQALATATRFLKEGGAQAVKLEGGARVAPAVAALVGAGIPVIGHLGLTPQSIHALGGYRVQGRDEAGEVLLADALAIEAAGAFAVVLEVVPADLAARVTKELHIATVGIGAGADCDAQVLVWQDMAGLSGGHVPRFVKRYADLRTVLGDAVRTYRDEVRGGQYPTVEHSY</sequence>
<reference key="1">
    <citation type="journal article" date="2007" name="Genome Res.">
        <title>Genome characteristics of facultatively symbiotic Frankia sp. strains reflect host range and host plant biogeography.</title>
        <authorList>
            <person name="Normand P."/>
            <person name="Lapierre P."/>
            <person name="Tisa L.S."/>
            <person name="Gogarten J.P."/>
            <person name="Alloisio N."/>
            <person name="Bagnarol E."/>
            <person name="Bassi C.A."/>
            <person name="Berry A.M."/>
            <person name="Bickhart D.M."/>
            <person name="Choisne N."/>
            <person name="Couloux A."/>
            <person name="Cournoyer B."/>
            <person name="Cruveiller S."/>
            <person name="Daubin V."/>
            <person name="Demange N."/>
            <person name="Francino M.P."/>
            <person name="Goltsman E."/>
            <person name="Huang Y."/>
            <person name="Kopp O.R."/>
            <person name="Labarre L."/>
            <person name="Lapidus A."/>
            <person name="Lavire C."/>
            <person name="Marechal J."/>
            <person name="Martinez M."/>
            <person name="Mastronunzio J.E."/>
            <person name="Mullin B.C."/>
            <person name="Niemann J."/>
            <person name="Pujic P."/>
            <person name="Rawnsley T."/>
            <person name="Rouy Z."/>
            <person name="Schenowitz C."/>
            <person name="Sellstedt A."/>
            <person name="Tavares F."/>
            <person name="Tomkins J.P."/>
            <person name="Vallenet D."/>
            <person name="Valverde C."/>
            <person name="Wall L.G."/>
            <person name="Wang Y."/>
            <person name="Medigue C."/>
            <person name="Benson D.R."/>
        </authorList>
    </citation>
    <scope>NUCLEOTIDE SEQUENCE [LARGE SCALE GENOMIC DNA]</scope>
    <source>
        <strain>DSM 45986 / CECT 9034 / ACN14a</strain>
    </source>
</reference>
<feature type="chain" id="PRO_0000297272" description="3-methyl-2-oxobutanoate hydroxymethyltransferase">
    <location>
        <begin position="1"/>
        <end position="303"/>
    </location>
</feature>
<feature type="region of interest" description="Disordered" evidence="2">
    <location>
        <begin position="1"/>
        <end position="41"/>
    </location>
</feature>
<feature type="compositionally biased region" description="Polar residues" evidence="2">
    <location>
        <begin position="1"/>
        <end position="10"/>
    </location>
</feature>
<feature type="active site" description="Proton acceptor" evidence="1">
    <location>
        <position position="221"/>
    </location>
</feature>
<feature type="binding site" evidence="1">
    <location>
        <begin position="84"/>
        <end position="85"/>
    </location>
    <ligand>
        <name>3-methyl-2-oxobutanoate</name>
        <dbReference type="ChEBI" id="CHEBI:11851"/>
    </ligand>
</feature>
<feature type="binding site" evidence="1">
    <location>
        <position position="84"/>
    </location>
    <ligand>
        <name>Mg(2+)</name>
        <dbReference type="ChEBI" id="CHEBI:18420"/>
    </ligand>
</feature>
<feature type="binding site" evidence="1">
    <location>
        <position position="123"/>
    </location>
    <ligand>
        <name>3-methyl-2-oxobutanoate</name>
        <dbReference type="ChEBI" id="CHEBI:11851"/>
    </ligand>
</feature>
<feature type="binding site" evidence="1">
    <location>
        <position position="123"/>
    </location>
    <ligand>
        <name>Mg(2+)</name>
        <dbReference type="ChEBI" id="CHEBI:18420"/>
    </ligand>
</feature>
<feature type="binding site" evidence="1">
    <location>
        <position position="153"/>
    </location>
    <ligand>
        <name>3-methyl-2-oxobutanoate</name>
        <dbReference type="ChEBI" id="CHEBI:11851"/>
    </ligand>
</feature>
<feature type="binding site" evidence="1">
    <location>
        <position position="155"/>
    </location>
    <ligand>
        <name>Mg(2+)</name>
        <dbReference type="ChEBI" id="CHEBI:18420"/>
    </ligand>
</feature>
<name>PANB_FRAAA</name>
<dbReference type="EC" id="2.1.2.11" evidence="1"/>
<dbReference type="EMBL" id="CT573213">
    <property type="protein sequence ID" value="CAJ63811.1"/>
    <property type="status" value="ALT_INIT"/>
    <property type="molecule type" value="Genomic_DNA"/>
</dbReference>
<dbReference type="RefSeq" id="WP_041940879.1">
    <property type="nucleotide sequence ID" value="NC_008278.1"/>
</dbReference>
<dbReference type="SMR" id="Q0RFD5"/>
<dbReference type="STRING" id="326424.FRAAL5171"/>
<dbReference type="KEGG" id="fal:FRAAL5171"/>
<dbReference type="eggNOG" id="COG0413">
    <property type="taxonomic scope" value="Bacteria"/>
</dbReference>
<dbReference type="HOGENOM" id="CLU_036645_1_0_11"/>
<dbReference type="OrthoDB" id="9781789at2"/>
<dbReference type="UniPathway" id="UPA00028">
    <property type="reaction ID" value="UER00003"/>
</dbReference>
<dbReference type="Proteomes" id="UP000000657">
    <property type="component" value="Chromosome"/>
</dbReference>
<dbReference type="GO" id="GO:0005737">
    <property type="term" value="C:cytoplasm"/>
    <property type="evidence" value="ECO:0007669"/>
    <property type="project" value="UniProtKB-SubCell"/>
</dbReference>
<dbReference type="GO" id="GO:0003864">
    <property type="term" value="F:3-methyl-2-oxobutanoate hydroxymethyltransferase activity"/>
    <property type="evidence" value="ECO:0007669"/>
    <property type="project" value="UniProtKB-UniRule"/>
</dbReference>
<dbReference type="GO" id="GO:0000287">
    <property type="term" value="F:magnesium ion binding"/>
    <property type="evidence" value="ECO:0007669"/>
    <property type="project" value="TreeGrafter"/>
</dbReference>
<dbReference type="GO" id="GO:0015940">
    <property type="term" value="P:pantothenate biosynthetic process"/>
    <property type="evidence" value="ECO:0007669"/>
    <property type="project" value="UniProtKB-UniRule"/>
</dbReference>
<dbReference type="CDD" id="cd06557">
    <property type="entry name" value="KPHMT-like"/>
    <property type="match status" value="1"/>
</dbReference>
<dbReference type="FunFam" id="3.20.20.60:FF:000003">
    <property type="entry name" value="3-methyl-2-oxobutanoate hydroxymethyltransferase"/>
    <property type="match status" value="1"/>
</dbReference>
<dbReference type="Gene3D" id="3.20.20.60">
    <property type="entry name" value="Phosphoenolpyruvate-binding domains"/>
    <property type="match status" value="1"/>
</dbReference>
<dbReference type="HAMAP" id="MF_00156">
    <property type="entry name" value="PanB"/>
    <property type="match status" value="1"/>
</dbReference>
<dbReference type="InterPro" id="IPR003700">
    <property type="entry name" value="Pantoate_hydroxy_MeTrfase"/>
</dbReference>
<dbReference type="InterPro" id="IPR015813">
    <property type="entry name" value="Pyrv/PenolPyrv_kinase-like_dom"/>
</dbReference>
<dbReference type="InterPro" id="IPR040442">
    <property type="entry name" value="Pyrv_kinase-like_dom_sf"/>
</dbReference>
<dbReference type="NCBIfam" id="TIGR00222">
    <property type="entry name" value="panB"/>
    <property type="match status" value="1"/>
</dbReference>
<dbReference type="NCBIfam" id="NF001452">
    <property type="entry name" value="PRK00311.1"/>
    <property type="match status" value="1"/>
</dbReference>
<dbReference type="PANTHER" id="PTHR20881">
    <property type="entry name" value="3-METHYL-2-OXOBUTANOATE HYDROXYMETHYLTRANSFERASE"/>
    <property type="match status" value="1"/>
</dbReference>
<dbReference type="PANTHER" id="PTHR20881:SF0">
    <property type="entry name" value="3-METHYL-2-OXOBUTANOATE HYDROXYMETHYLTRANSFERASE"/>
    <property type="match status" value="1"/>
</dbReference>
<dbReference type="Pfam" id="PF02548">
    <property type="entry name" value="Pantoate_transf"/>
    <property type="match status" value="1"/>
</dbReference>
<dbReference type="PIRSF" id="PIRSF000388">
    <property type="entry name" value="Pantoate_hydroxy_MeTrfase"/>
    <property type="match status" value="1"/>
</dbReference>
<dbReference type="SUPFAM" id="SSF51621">
    <property type="entry name" value="Phosphoenolpyruvate/pyruvate domain"/>
    <property type="match status" value="1"/>
</dbReference>
<comment type="function">
    <text evidence="1">Catalyzes the reversible reaction in which hydroxymethyl group from 5,10-methylenetetrahydrofolate is transferred onto alpha-ketoisovalerate to form ketopantoate.</text>
</comment>
<comment type="catalytic activity">
    <reaction evidence="1">
        <text>3-methyl-2-oxobutanoate + (6R)-5,10-methylene-5,6,7,8-tetrahydrofolate + H2O = 2-dehydropantoate + (6S)-5,6,7,8-tetrahydrofolate</text>
        <dbReference type="Rhea" id="RHEA:11824"/>
        <dbReference type="ChEBI" id="CHEBI:11561"/>
        <dbReference type="ChEBI" id="CHEBI:11851"/>
        <dbReference type="ChEBI" id="CHEBI:15377"/>
        <dbReference type="ChEBI" id="CHEBI:15636"/>
        <dbReference type="ChEBI" id="CHEBI:57453"/>
        <dbReference type="EC" id="2.1.2.11"/>
    </reaction>
</comment>
<comment type="cofactor">
    <cofactor evidence="1">
        <name>Mg(2+)</name>
        <dbReference type="ChEBI" id="CHEBI:18420"/>
    </cofactor>
    <text evidence="1">Binds 1 Mg(2+) ion per subunit.</text>
</comment>
<comment type="pathway">
    <text evidence="1">Cofactor biosynthesis; (R)-pantothenate biosynthesis; (R)-pantoate from 3-methyl-2-oxobutanoate: step 1/2.</text>
</comment>
<comment type="subunit">
    <text evidence="1">Homodecamer; pentamer of dimers.</text>
</comment>
<comment type="subcellular location">
    <subcellularLocation>
        <location evidence="1">Cytoplasm</location>
    </subcellularLocation>
</comment>
<comment type="similarity">
    <text evidence="1">Belongs to the PanB family.</text>
</comment>
<comment type="sequence caution" evidence="3">
    <conflict type="erroneous initiation">
        <sequence resource="EMBL-CDS" id="CAJ63811"/>
    </conflict>
</comment>
<proteinExistence type="inferred from homology"/>
<evidence type="ECO:0000255" key="1">
    <source>
        <dbReference type="HAMAP-Rule" id="MF_00156"/>
    </source>
</evidence>
<evidence type="ECO:0000256" key="2">
    <source>
        <dbReference type="SAM" id="MobiDB-lite"/>
    </source>
</evidence>
<evidence type="ECO:0000305" key="3"/>